<comment type="function">
    <text evidence="1">Binds as a heterodimer with protein bS6 to the central domain of the 16S rRNA, where it helps stabilize the platform of the 30S subunit.</text>
</comment>
<comment type="subunit">
    <text evidence="1">Part of the 30S ribosomal subunit. Forms a tight heterodimer with protein bS6.</text>
</comment>
<comment type="similarity">
    <text evidence="1">Belongs to the bacterial ribosomal protein bS18 family.</text>
</comment>
<reference key="1">
    <citation type="journal article" date="2000" name="Nature">
        <title>The genome sequence of the plant pathogen Xylella fastidiosa.</title>
        <authorList>
            <person name="Simpson A.J.G."/>
            <person name="Reinach F.C."/>
            <person name="Arruda P."/>
            <person name="Abreu F.A."/>
            <person name="Acencio M."/>
            <person name="Alvarenga R."/>
            <person name="Alves L.M.C."/>
            <person name="Araya J.E."/>
            <person name="Baia G.S."/>
            <person name="Baptista C.S."/>
            <person name="Barros M.H."/>
            <person name="Bonaccorsi E.D."/>
            <person name="Bordin S."/>
            <person name="Bove J.M."/>
            <person name="Briones M.R.S."/>
            <person name="Bueno M.R.P."/>
            <person name="Camargo A.A."/>
            <person name="Camargo L.E.A."/>
            <person name="Carraro D.M."/>
            <person name="Carrer H."/>
            <person name="Colauto N.B."/>
            <person name="Colombo C."/>
            <person name="Costa F.F."/>
            <person name="Costa M.C.R."/>
            <person name="Costa-Neto C.M."/>
            <person name="Coutinho L.L."/>
            <person name="Cristofani M."/>
            <person name="Dias-Neto E."/>
            <person name="Docena C."/>
            <person name="El-Dorry H."/>
            <person name="Facincani A.P."/>
            <person name="Ferreira A.J.S."/>
            <person name="Ferreira V.C.A."/>
            <person name="Ferro J.A."/>
            <person name="Fraga J.S."/>
            <person name="Franca S.C."/>
            <person name="Franco M.C."/>
            <person name="Frohme M."/>
            <person name="Furlan L.R."/>
            <person name="Garnier M."/>
            <person name="Goldman G.H."/>
            <person name="Goldman M.H.S."/>
            <person name="Gomes S.L."/>
            <person name="Gruber A."/>
            <person name="Ho P.L."/>
            <person name="Hoheisel J.D."/>
            <person name="Junqueira M.L."/>
            <person name="Kemper E.L."/>
            <person name="Kitajima J.P."/>
            <person name="Krieger J.E."/>
            <person name="Kuramae E.E."/>
            <person name="Laigret F."/>
            <person name="Lambais M.R."/>
            <person name="Leite L.C.C."/>
            <person name="Lemos E.G.M."/>
            <person name="Lemos M.V.F."/>
            <person name="Lopes S.A."/>
            <person name="Lopes C.R."/>
            <person name="Machado J.A."/>
            <person name="Machado M.A."/>
            <person name="Madeira A.M.B.N."/>
            <person name="Madeira H.M.F."/>
            <person name="Marino C.L."/>
            <person name="Marques M.V."/>
            <person name="Martins E.A.L."/>
            <person name="Martins E.M.F."/>
            <person name="Matsukuma A.Y."/>
            <person name="Menck C.F.M."/>
            <person name="Miracca E.C."/>
            <person name="Miyaki C.Y."/>
            <person name="Monteiro-Vitorello C.B."/>
            <person name="Moon D.H."/>
            <person name="Nagai M.A."/>
            <person name="Nascimento A.L.T.O."/>
            <person name="Netto L.E.S."/>
            <person name="Nhani A. Jr."/>
            <person name="Nobrega F.G."/>
            <person name="Nunes L.R."/>
            <person name="Oliveira M.A."/>
            <person name="de Oliveira M.C."/>
            <person name="de Oliveira R.C."/>
            <person name="Palmieri D.A."/>
            <person name="Paris A."/>
            <person name="Peixoto B.R."/>
            <person name="Pereira G.A.G."/>
            <person name="Pereira H.A. Jr."/>
            <person name="Pesquero J.B."/>
            <person name="Quaggio R.B."/>
            <person name="Roberto P.G."/>
            <person name="Rodrigues V."/>
            <person name="de Rosa A.J.M."/>
            <person name="de Rosa V.E. Jr."/>
            <person name="de Sa R.G."/>
            <person name="Santelli R.V."/>
            <person name="Sawasaki H.E."/>
            <person name="da Silva A.C.R."/>
            <person name="da Silva A.M."/>
            <person name="da Silva F.R."/>
            <person name="Silva W.A. Jr."/>
            <person name="da Silveira J.F."/>
            <person name="Silvestri M.L.Z."/>
            <person name="Siqueira W.J."/>
            <person name="de Souza A.A."/>
            <person name="de Souza A.P."/>
            <person name="Terenzi M.F."/>
            <person name="Truffi D."/>
            <person name="Tsai S.M."/>
            <person name="Tsuhako M.H."/>
            <person name="Vallada H."/>
            <person name="Van Sluys M.A."/>
            <person name="Verjovski-Almeida S."/>
            <person name="Vettore A.L."/>
            <person name="Zago M.A."/>
            <person name="Zatz M."/>
            <person name="Meidanis J."/>
            <person name="Setubal J.C."/>
        </authorList>
    </citation>
    <scope>NUCLEOTIDE SEQUENCE [LARGE SCALE GENOMIC DNA]</scope>
    <source>
        <strain>9a5c</strain>
    </source>
</reference>
<organism>
    <name type="scientific">Xylella fastidiosa (strain 9a5c)</name>
    <dbReference type="NCBI Taxonomy" id="160492"/>
    <lineage>
        <taxon>Bacteria</taxon>
        <taxon>Pseudomonadati</taxon>
        <taxon>Pseudomonadota</taxon>
        <taxon>Gammaproteobacteria</taxon>
        <taxon>Lysobacterales</taxon>
        <taxon>Lysobacteraceae</taxon>
        <taxon>Xylella</taxon>
    </lineage>
</organism>
<sequence length="76" mass="9017">MSKFFRRRKFCKFTAEGIKEIDYKDLNTLRQYLTENGKIVPSRVTGTKSKYQRQLTTAVKRARFLALIPYTDNHDI</sequence>
<feature type="chain" id="PRO_0000111267" description="Small ribosomal subunit protein bS18">
    <location>
        <begin position="1"/>
        <end position="76"/>
    </location>
</feature>
<protein>
    <recommendedName>
        <fullName evidence="1">Small ribosomal subunit protein bS18</fullName>
    </recommendedName>
    <alternativeName>
        <fullName evidence="2">30S ribosomal protein S18</fullName>
    </alternativeName>
</protein>
<evidence type="ECO:0000255" key="1">
    <source>
        <dbReference type="HAMAP-Rule" id="MF_00270"/>
    </source>
</evidence>
<evidence type="ECO:0000305" key="2"/>
<gene>
    <name evidence="1" type="primary">rpsR</name>
    <name type="ordered locus">XF_2560</name>
</gene>
<name>RS18_XYLFA</name>
<proteinExistence type="inferred from homology"/>
<keyword id="KW-0687">Ribonucleoprotein</keyword>
<keyword id="KW-0689">Ribosomal protein</keyword>
<keyword id="KW-0694">RNA-binding</keyword>
<keyword id="KW-0699">rRNA-binding</keyword>
<accession>Q9PAF8</accession>
<dbReference type="EMBL" id="AE003849">
    <property type="protein sequence ID" value="AAF85357.1"/>
    <property type="molecule type" value="Genomic_DNA"/>
</dbReference>
<dbReference type="PIR" id="C82543">
    <property type="entry name" value="C82543"/>
</dbReference>
<dbReference type="RefSeq" id="WP_010894981.1">
    <property type="nucleotide sequence ID" value="NC_002488.3"/>
</dbReference>
<dbReference type="SMR" id="Q9PAF8"/>
<dbReference type="STRING" id="160492.XF_2560"/>
<dbReference type="KEGG" id="xfa:XF_2560"/>
<dbReference type="eggNOG" id="COG0238">
    <property type="taxonomic scope" value="Bacteria"/>
</dbReference>
<dbReference type="HOGENOM" id="CLU_148710_2_3_6"/>
<dbReference type="Proteomes" id="UP000000812">
    <property type="component" value="Chromosome"/>
</dbReference>
<dbReference type="GO" id="GO:0022627">
    <property type="term" value="C:cytosolic small ribosomal subunit"/>
    <property type="evidence" value="ECO:0007669"/>
    <property type="project" value="TreeGrafter"/>
</dbReference>
<dbReference type="GO" id="GO:0070181">
    <property type="term" value="F:small ribosomal subunit rRNA binding"/>
    <property type="evidence" value="ECO:0007669"/>
    <property type="project" value="TreeGrafter"/>
</dbReference>
<dbReference type="GO" id="GO:0003735">
    <property type="term" value="F:structural constituent of ribosome"/>
    <property type="evidence" value="ECO:0007669"/>
    <property type="project" value="InterPro"/>
</dbReference>
<dbReference type="GO" id="GO:0006412">
    <property type="term" value="P:translation"/>
    <property type="evidence" value="ECO:0007669"/>
    <property type="project" value="UniProtKB-UniRule"/>
</dbReference>
<dbReference type="FunFam" id="4.10.640.10:FF:000001">
    <property type="entry name" value="30S ribosomal protein S18"/>
    <property type="match status" value="1"/>
</dbReference>
<dbReference type="Gene3D" id="4.10.640.10">
    <property type="entry name" value="Ribosomal protein S18"/>
    <property type="match status" value="1"/>
</dbReference>
<dbReference type="HAMAP" id="MF_00270">
    <property type="entry name" value="Ribosomal_bS18"/>
    <property type="match status" value="1"/>
</dbReference>
<dbReference type="InterPro" id="IPR001648">
    <property type="entry name" value="Ribosomal_bS18"/>
</dbReference>
<dbReference type="InterPro" id="IPR018275">
    <property type="entry name" value="Ribosomal_bS18_CS"/>
</dbReference>
<dbReference type="InterPro" id="IPR036870">
    <property type="entry name" value="Ribosomal_bS18_sf"/>
</dbReference>
<dbReference type="NCBIfam" id="TIGR00165">
    <property type="entry name" value="S18"/>
    <property type="match status" value="1"/>
</dbReference>
<dbReference type="PANTHER" id="PTHR13479">
    <property type="entry name" value="30S RIBOSOMAL PROTEIN S18"/>
    <property type="match status" value="1"/>
</dbReference>
<dbReference type="PANTHER" id="PTHR13479:SF40">
    <property type="entry name" value="SMALL RIBOSOMAL SUBUNIT PROTEIN BS18M"/>
    <property type="match status" value="1"/>
</dbReference>
<dbReference type="Pfam" id="PF01084">
    <property type="entry name" value="Ribosomal_S18"/>
    <property type="match status" value="1"/>
</dbReference>
<dbReference type="PRINTS" id="PR00974">
    <property type="entry name" value="RIBOSOMALS18"/>
</dbReference>
<dbReference type="SUPFAM" id="SSF46911">
    <property type="entry name" value="Ribosomal protein S18"/>
    <property type="match status" value="1"/>
</dbReference>
<dbReference type="PROSITE" id="PS00057">
    <property type="entry name" value="RIBOSOMAL_S18"/>
    <property type="match status" value="1"/>
</dbReference>